<keyword id="KW-0963">Cytoplasm</keyword>
<keyword id="KW-0342">GTP-binding</keyword>
<keyword id="KW-0436">Ligase</keyword>
<keyword id="KW-0460">Magnesium</keyword>
<keyword id="KW-0479">Metal-binding</keyword>
<keyword id="KW-0547">Nucleotide-binding</keyword>
<keyword id="KW-0658">Purine biosynthesis</keyword>
<keyword id="KW-1185">Reference proteome</keyword>
<organism>
    <name type="scientific">Cytophaga hutchinsonii (strain ATCC 33406 / DSM 1761 / CIP 103989 / NBRC 15051 / NCIMB 9469 / D465)</name>
    <dbReference type="NCBI Taxonomy" id="269798"/>
    <lineage>
        <taxon>Bacteria</taxon>
        <taxon>Pseudomonadati</taxon>
        <taxon>Bacteroidota</taxon>
        <taxon>Cytophagia</taxon>
        <taxon>Cytophagales</taxon>
        <taxon>Cytophagaceae</taxon>
        <taxon>Cytophaga</taxon>
    </lineage>
</organism>
<accession>Q11UE6</accession>
<proteinExistence type="inferred from homology"/>
<gene>
    <name evidence="1" type="primary">purA</name>
    <name type="ordered locus">CHU_1701</name>
</gene>
<name>PURA_CYTH3</name>
<feature type="chain" id="PRO_1000000809" description="Adenylosuccinate synthetase">
    <location>
        <begin position="1"/>
        <end position="431"/>
    </location>
</feature>
<feature type="active site" description="Proton acceptor" evidence="1">
    <location>
        <position position="13"/>
    </location>
</feature>
<feature type="active site" description="Proton donor" evidence="1">
    <location>
        <position position="41"/>
    </location>
</feature>
<feature type="binding site" evidence="1">
    <location>
        <begin position="12"/>
        <end position="18"/>
    </location>
    <ligand>
        <name>GTP</name>
        <dbReference type="ChEBI" id="CHEBI:37565"/>
    </ligand>
</feature>
<feature type="binding site" description="in other chain" evidence="1">
    <location>
        <begin position="13"/>
        <end position="16"/>
    </location>
    <ligand>
        <name>IMP</name>
        <dbReference type="ChEBI" id="CHEBI:58053"/>
        <note>ligand shared between dimeric partners</note>
    </ligand>
</feature>
<feature type="binding site" evidence="1">
    <location>
        <position position="13"/>
    </location>
    <ligand>
        <name>Mg(2+)</name>
        <dbReference type="ChEBI" id="CHEBI:18420"/>
    </ligand>
</feature>
<feature type="binding site" description="in other chain" evidence="1">
    <location>
        <begin position="38"/>
        <end position="41"/>
    </location>
    <ligand>
        <name>IMP</name>
        <dbReference type="ChEBI" id="CHEBI:58053"/>
        <note>ligand shared between dimeric partners</note>
    </ligand>
</feature>
<feature type="binding site" evidence="1">
    <location>
        <begin position="40"/>
        <end position="42"/>
    </location>
    <ligand>
        <name>GTP</name>
        <dbReference type="ChEBI" id="CHEBI:37565"/>
    </ligand>
</feature>
<feature type="binding site" evidence="1">
    <location>
        <position position="40"/>
    </location>
    <ligand>
        <name>Mg(2+)</name>
        <dbReference type="ChEBI" id="CHEBI:18420"/>
    </ligand>
</feature>
<feature type="binding site" description="in other chain" evidence="1">
    <location>
        <position position="130"/>
    </location>
    <ligand>
        <name>IMP</name>
        <dbReference type="ChEBI" id="CHEBI:58053"/>
        <note>ligand shared between dimeric partners</note>
    </ligand>
</feature>
<feature type="binding site" evidence="1">
    <location>
        <position position="144"/>
    </location>
    <ligand>
        <name>IMP</name>
        <dbReference type="ChEBI" id="CHEBI:58053"/>
        <note>ligand shared between dimeric partners</note>
    </ligand>
</feature>
<feature type="binding site" description="in other chain" evidence="1">
    <location>
        <position position="224"/>
    </location>
    <ligand>
        <name>IMP</name>
        <dbReference type="ChEBI" id="CHEBI:58053"/>
        <note>ligand shared between dimeric partners</note>
    </ligand>
</feature>
<feature type="binding site" description="in other chain" evidence="1">
    <location>
        <position position="239"/>
    </location>
    <ligand>
        <name>IMP</name>
        <dbReference type="ChEBI" id="CHEBI:58053"/>
        <note>ligand shared between dimeric partners</note>
    </ligand>
</feature>
<feature type="binding site" evidence="1">
    <location>
        <begin position="299"/>
        <end position="305"/>
    </location>
    <ligand>
        <name>substrate</name>
    </ligand>
</feature>
<feature type="binding site" description="in other chain" evidence="1">
    <location>
        <position position="303"/>
    </location>
    <ligand>
        <name>IMP</name>
        <dbReference type="ChEBI" id="CHEBI:58053"/>
        <note>ligand shared between dimeric partners</note>
    </ligand>
</feature>
<feature type="binding site" evidence="1">
    <location>
        <position position="305"/>
    </location>
    <ligand>
        <name>GTP</name>
        <dbReference type="ChEBI" id="CHEBI:37565"/>
    </ligand>
</feature>
<feature type="binding site" evidence="1">
    <location>
        <begin position="331"/>
        <end position="333"/>
    </location>
    <ligand>
        <name>GTP</name>
        <dbReference type="ChEBI" id="CHEBI:37565"/>
    </ligand>
</feature>
<feature type="binding site" evidence="1">
    <location>
        <begin position="413"/>
        <end position="415"/>
    </location>
    <ligand>
        <name>GTP</name>
        <dbReference type="ChEBI" id="CHEBI:37565"/>
    </ligand>
</feature>
<reference key="1">
    <citation type="journal article" date="2007" name="Appl. Environ. Microbiol.">
        <title>Genome sequence of the cellulolytic gliding bacterium Cytophaga hutchinsonii.</title>
        <authorList>
            <person name="Xie G."/>
            <person name="Bruce D.C."/>
            <person name="Challacombe J.F."/>
            <person name="Chertkov O."/>
            <person name="Detter J.C."/>
            <person name="Gilna P."/>
            <person name="Han C.S."/>
            <person name="Lucas S."/>
            <person name="Misra M."/>
            <person name="Myers G.L."/>
            <person name="Richardson P."/>
            <person name="Tapia R."/>
            <person name="Thayer N."/>
            <person name="Thompson L.S."/>
            <person name="Brettin T.S."/>
            <person name="Henrissat B."/>
            <person name="Wilson D.B."/>
            <person name="McBride M.J."/>
        </authorList>
    </citation>
    <scope>NUCLEOTIDE SEQUENCE [LARGE SCALE GENOMIC DNA]</scope>
    <source>
        <strain>ATCC 33406 / DSM 1761 / JCM 20678 / CIP 103989 / IAM 12607 / NBRC 15051 / NCIMB 9469 / D465</strain>
    </source>
</reference>
<evidence type="ECO:0000255" key="1">
    <source>
        <dbReference type="HAMAP-Rule" id="MF_00011"/>
    </source>
</evidence>
<dbReference type="EC" id="6.3.4.4" evidence="1"/>
<dbReference type="EMBL" id="CP000383">
    <property type="protein sequence ID" value="ABG58968.1"/>
    <property type="molecule type" value="Genomic_DNA"/>
</dbReference>
<dbReference type="RefSeq" id="WP_011585085.1">
    <property type="nucleotide sequence ID" value="NC_008255.1"/>
</dbReference>
<dbReference type="SMR" id="Q11UE6"/>
<dbReference type="STRING" id="269798.CHU_1701"/>
<dbReference type="KEGG" id="chu:CHU_1701"/>
<dbReference type="eggNOG" id="COG0104">
    <property type="taxonomic scope" value="Bacteria"/>
</dbReference>
<dbReference type="HOGENOM" id="CLU_029848_0_0_10"/>
<dbReference type="OrthoDB" id="9807553at2"/>
<dbReference type="UniPathway" id="UPA00075">
    <property type="reaction ID" value="UER00335"/>
</dbReference>
<dbReference type="Proteomes" id="UP000001822">
    <property type="component" value="Chromosome"/>
</dbReference>
<dbReference type="GO" id="GO:0005737">
    <property type="term" value="C:cytoplasm"/>
    <property type="evidence" value="ECO:0007669"/>
    <property type="project" value="UniProtKB-SubCell"/>
</dbReference>
<dbReference type="GO" id="GO:0004019">
    <property type="term" value="F:adenylosuccinate synthase activity"/>
    <property type="evidence" value="ECO:0007669"/>
    <property type="project" value="UniProtKB-UniRule"/>
</dbReference>
<dbReference type="GO" id="GO:0005525">
    <property type="term" value="F:GTP binding"/>
    <property type="evidence" value="ECO:0007669"/>
    <property type="project" value="UniProtKB-UniRule"/>
</dbReference>
<dbReference type="GO" id="GO:0000287">
    <property type="term" value="F:magnesium ion binding"/>
    <property type="evidence" value="ECO:0007669"/>
    <property type="project" value="UniProtKB-UniRule"/>
</dbReference>
<dbReference type="GO" id="GO:0044208">
    <property type="term" value="P:'de novo' AMP biosynthetic process"/>
    <property type="evidence" value="ECO:0007669"/>
    <property type="project" value="UniProtKB-UniRule"/>
</dbReference>
<dbReference type="GO" id="GO:0046040">
    <property type="term" value="P:IMP metabolic process"/>
    <property type="evidence" value="ECO:0007669"/>
    <property type="project" value="TreeGrafter"/>
</dbReference>
<dbReference type="CDD" id="cd03108">
    <property type="entry name" value="AdSS"/>
    <property type="match status" value="1"/>
</dbReference>
<dbReference type="FunFam" id="1.10.300.10:FF:000001">
    <property type="entry name" value="Adenylosuccinate synthetase"/>
    <property type="match status" value="1"/>
</dbReference>
<dbReference type="FunFam" id="3.90.170.10:FF:000001">
    <property type="entry name" value="Adenylosuccinate synthetase"/>
    <property type="match status" value="1"/>
</dbReference>
<dbReference type="Gene3D" id="3.40.440.10">
    <property type="entry name" value="Adenylosuccinate Synthetase, subunit A, domain 1"/>
    <property type="match status" value="1"/>
</dbReference>
<dbReference type="Gene3D" id="1.10.300.10">
    <property type="entry name" value="Adenylosuccinate Synthetase, subunit A, domain 2"/>
    <property type="match status" value="1"/>
</dbReference>
<dbReference type="Gene3D" id="3.90.170.10">
    <property type="entry name" value="Adenylosuccinate Synthetase, subunit A, domain 3"/>
    <property type="match status" value="1"/>
</dbReference>
<dbReference type="HAMAP" id="MF_00011">
    <property type="entry name" value="Adenylosucc_synth"/>
    <property type="match status" value="1"/>
</dbReference>
<dbReference type="InterPro" id="IPR018220">
    <property type="entry name" value="Adenylosuccin_syn_GTP-bd"/>
</dbReference>
<dbReference type="InterPro" id="IPR033128">
    <property type="entry name" value="Adenylosuccin_syn_Lys_AS"/>
</dbReference>
<dbReference type="InterPro" id="IPR042109">
    <property type="entry name" value="Adenylosuccinate_synth_dom1"/>
</dbReference>
<dbReference type="InterPro" id="IPR042110">
    <property type="entry name" value="Adenylosuccinate_synth_dom2"/>
</dbReference>
<dbReference type="InterPro" id="IPR042111">
    <property type="entry name" value="Adenylosuccinate_synth_dom3"/>
</dbReference>
<dbReference type="InterPro" id="IPR001114">
    <property type="entry name" value="Adenylosuccinate_synthetase"/>
</dbReference>
<dbReference type="InterPro" id="IPR027417">
    <property type="entry name" value="P-loop_NTPase"/>
</dbReference>
<dbReference type="NCBIfam" id="NF002223">
    <property type="entry name" value="PRK01117.1"/>
    <property type="match status" value="1"/>
</dbReference>
<dbReference type="NCBIfam" id="TIGR00184">
    <property type="entry name" value="purA"/>
    <property type="match status" value="1"/>
</dbReference>
<dbReference type="PANTHER" id="PTHR11846">
    <property type="entry name" value="ADENYLOSUCCINATE SYNTHETASE"/>
    <property type="match status" value="1"/>
</dbReference>
<dbReference type="PANTHER" id="PTHR11846:SF0">
    <property type="entry name" value="ADENYLOSUCCINATE SYNTHETASE"/>
    <property type="match status" value="1"/>
</dbReference>
<dbReference type="Pfam" id="PF00709">
    <property type="entry name" value="Adenylsucc_synt"/>
    <property type="match status" value="1"/>
</dbReference>
<dbReference type="SMART" id="SM00788">
    <property type="entry name" value="Adenylsucc_synt"/>
    <property type="match status" value="1"/>
</dbReference>
<dbReference type="SUPFAM" id="SSF52540">
    <property type="entry name" value="P-loop containing nucleoside triphosphate hydrolases"/>
    <property type="match status" value="1"/>
</dbReference>
<dbReference type="PROSITE" id="PS01266">
    <property type="entry name" value="ADENYLOSUCCIN_SYN_1"/>
    <property type="match status" value="1"/>
</dbReference>
<dbReference type="PROSITE" id="PS00513">
    <property type="entry name" value="ADENYLOSUCCIN_SYN_2"/>
    <property type="match status" value="1"/>
</dbReference>
<protein>
    <recommendedName>
        <fullName evidence="1">Adenylosuccinate synthetase</fullName>
        <shortName evidence="1">AMPSase</shortName>
        <shortName evidence="1">AdSS</shortName>
        <ecNumber evidence="1">6.3.4.4</ecNumber>
    </recommendedName>
    <alternativeName>
        <fullName evidence="1">IMP--aspartate ligase</fullName>
    </alternativeName>
</protein>
<comment type="function">
    <text evidence="1">Plays an important role in the de novo pathway of purine nucleotide biosynthesis. Catalyzes the first committed step in the biosynthesis of AMP from IMP.</text>
</comment>
<comment type="catalytic activity">
    <reaction evidence="1">
        <text>IMP + L-aspartate + GTP = N(6)-(1,2-dicarboxyethyl)-AMP + GDP + phosphate + 2 H(+)</text>
        <dbReference type="Rhea" id="RHEA:15753"/>
        <dbReference type="ChEBI" id="CHEBI:15378"/>
        <dbReference type="ChEBI" id="CHEBI:29991"/>
        <dbReference type="ChEBI" id="CHEBI:37565"/>
        <dbReference type="ChEBI" id="CHEBI:43474"/>
        <dbReference type="ChEBI" id="CHEBI:57567"/>
        <dbReference type="ChEBI" id="CHEBI:58053"/>
        <dbReference type="ChEBI" id="CHEBI:58189"/>
        <dbReference type="EC" id="6.3.4.4"/>
    </reaction>
</comment>
<comment type="cofactor">
    <cofactor evidence="1">
        <name>Mg(2+)</name>
        <dbReference type="ChEBI" id="CHEBI:18420"/>
    </cofactor>
    <text evidence="1">Binds 1 Mg(2+) ion per subunit.</text>
</comment>
<comment type="pathway">
    <text evidence="1">Purine metabolism; AMP biosynthesis via de novo pathway; AMP from IMP: step 1/2.</text>
</comment>
<comment type="subunit">
    <text evidence="1">Homodimer.</text>
</comment>
<comment type="subcellular location">
    <subcellularLocation>
        <location evidence="1">Cytoplasm</location>
    </subcellularLocation>
</comment>
<comment type="similarity">
    <text evidence="1">Belongs to the adenylosuccinate synthetase family.</text>
</comment>
<sequence length="431" mass="47697">MAVDVLLGLQWGDEGKGKVVDVLAPKYDYVARFQGGPNAGHTLIFDGHKVVLHQIPSGVFRSNITNLIGNGLVLDVIALFEKEIDKLEAFKLNLNKNLFISKKAALILPSHVELDKAYEAAKGAGKIGSTLRGIGPTYTDKVSRHGLRVGDILSPDFMDKYNKLVDQHKQILDFHKHDYSEMKEREDLFFKYIDRLRKMNLVDSEYFINDAIQSKKTILAEGAQGSLLDIDFGSYPFVTSSSTMVAGACTGLGIAPKHIGNVFGIFKAYCTRVGSGPFPTELHDAVGEEIRKQGNEFGSTTGRPRRCGWLDLPALKYACMINGVSHLLMMKADVLNAFEELQVCTHYKLGNGDIVDTLPYDMCTNDLTPVYKTLKGWNQDLSNCETFDSLPQALLDYSAFIEAELGLPITLISIGPDRKETLIKDFSFITA</sequence>